<keyword id="KW-0414">Isoprene biosynthesis</keyword>
<keyword id="KW-0548">Nucleotidyltransferase</keyword>
<keyword id="KW-0808">Transferase</keyword>
<gene>
    <name evidence="1" type="primary">ispD</name>
    <name type="ordered locus">Pmob_1218</name>
</gene>
<feature type="chain" id="PRO_1000075938" description="2-C-methyl-D-erythritol 4-phosphate cytidylyltransferase">
    <location>
        <begin position="1"/>
        <end position="227"/>
    </location>
</feature>
<feature type="site" description="Transition state stabilizer" evidence="1">
    <location>
        <position position="14"/>
    </location>
</feature>
<feature type="site" description="Transition state stabilizer" evidence="1">
    <location>
        <position position="21"/>
    </location>
</feature>
<feature type="site" description="Positions MEP for the nucleophilic attack" evidence="1">
    <location>
        <position position="153"/>
    </location>
</feature>
<feature type="site" description="Positions MEP for the nucleophilic attack" evidence="1">
    <location>
        <position position="209"/>
    </location>
</feature>
<sequence length="227" mass="25818">MVYAIIVAAGEGKRAGFEIPKQFVKLNNKTILRMSAEKFQNSASIDKFLVVSHRNYVDLTEKEVKIFSKFENVVIGGSNRQESVYNALMYLGKKENKPDFVCIHDAVRPFVDTNKIDESIYKAKEIGGAVLAEMAENTISQVNNGRIVKTLERSQIYLHHTPQTFDFNKLLKAYQKAEKILSSFTDDASIFIHAGYETAIVEDYKNNIKLTKKEDFELAKCIFELNS</sequence>
<evidence type="ECO:0000255" key="1">
    <source>
        <dbReference type="HAMAP-Rule" id="MF_00108"/>
    </source>
</evidence>
<name>ISPD_PETMO</name>
<comment type="function">
    <text evidence="1">Catalyzes the formation of 4-diphosphocytidyl-2-C-methyl-D-erythritol from CTP and 2-C-methyl-D-erythritol 4-phosphate (MEP).</text>
</comment>
<comment type="catalytic activity">
    <reaction evidence="1">
        <text>2-C-methyl-D-erythritol 4-phosphate + CTP + H(+) = 4-CDP-2-C-methyl-D-erythritol + diphosphate</text>
        <dbReference type="Rhea" id="RHEA:13429"/>
        <dbReference type="ChEBI" id="CHEBI:15378"/>
        <dbReference type="ChEBI" id="CHEBI:33019"/>
        <dbReference type="ChEBI" id="CHEBI:37563"/>
        <dbReference type="ChEBI" id="CHEBI:57823"/>
        <dbReference type="ChEBI" id="CHEBI:58262"/>
        <dbReference type="EC" id="2.7.7.60"/>
    </reaction>
</comment>
<comment type="pathway">
    <text evidence="1">Isoprenoid biosynthesis; isopentenyl diphosphate biosynthesis via DXP pathway; isopentenyl diphosphate from 1-deoxy-D-xylulose 5-phosphate: step 2/6.</text>
</comment>
<comment type="similarity">
    <text evidence="1">Belongs to the IspD/TarI cytidylyltransferase family. IspD subfamily.</text>
</comment>
<proteinExistence type="inferred from homology"/>
<dbReference type="EC" id="2.7.7.60" evidence="1"/>
<dbReference type="EMBL" id="CP000879">
    <property type="protein sequence ID" value="ABX31934.1"/>
    <property type="molecule type" value="Genomic_DNA"/>
</dbReference>
<dbReference type="RefSeq" id="WP_012209034.1">
    <property type="nucleotide sequence ID" value="NC_010003.1"/>
</dbReference>
<dbReference type="SMR" id="A9BHR2"/>
<dbReference type="STRING" id="403833.Pmob_1218"/>
<dbReference type="KEGG" id="pmo:Pmob_1218"/>
<dbReference type="eggNOG" id="COG1211">
    <property type="taxonomic scope" value="Bacteria"/>
</dbReference>
<dbReference type="HOGENOM" id="CLU_061281_2_2_0"/>
<dbReference type="OrthoDB" id="9806837at2"/>
<dbReference type="UniPathway" id="UPA00056">
    <property type="reaction ID" value="UER00093"/>
</dbReference>
<dbReference type="Proteomes" id="UP000000789">
    <property type="component" value="Chromosome"/>
</dbReference>
<dbReference type="GO" id="GO:0050518">
    <property type="term" value="F:2-C-methyl-D-erythritol 4-phosphate cytidylyltransferase activity"/>
    <property type="evidence" value="ECO:0007669"/>
    <property type="project" value="UniProtKB-UniRule"/>
</dbReference>
<dbReference type="GO" id="GO:0019288">
    <property type="term" value="P:isopentenyl diphosphate biosynthetic process, methylerythritol 4-phosphate pathway"/>
    <property type="evidence" value="ECO:0007669"/>
    <property type="project" value="UniProtKB-UniRule"/>
</dbReference>
<dbReference type="CDD" id="cd02516">
    <property type="entry name" value="CDP-ME_synthetase"/>
    <property type="match status" value="1"/>
</dbReference>
<dbReference type="FunFam" id="3.90.550.10:FF:000003">
    <property type="entry name" value="2-C-methyl-D-erythritol 4-phosphate cytidylyltransferase"/>
    <property type="match status" value="1"/>
</dbReference>
<dbReference type="Gene3D" id="3.90.550.10">
    <property type="entry name" value="Spore Coat Polysaccharide Biosynthesis Protein SpsA, Chain A"/>
    <property type="match status" value="1"/>
</dbReference>
<dbReference type="HAMAP" id="MF_00108">
    <property type="entry name" value="IspD"/>
    <property type="match status" value="1"/>
</dbReference>
<dbReference type="InterPro" id="IPR001228">
    <property type="entry name" value="IspD"/>
</dbReference>
<dbReference type="InterPro" id="IPR034683">
    <property type="entry name" value="IspD/TarI"/>
</dbReference>
<dbReference type="InterPro" id="IPR050088">
    <property type="entry name" value="IspD/TarI_cytidylyltransf_bact"/>
</dbReference>
<dbReference type="InterPro" id="IPR018294">
    <property type="entry name" value="ISPD_synthase_CS"/>
</dbReference>
<dbReference type="InterPro" id="IPR029044">
    <property type="entry name" value="Nucleotide-diphossugar_trans"/>
</dbReference>
<dbReference type="NCBIfam" id="TIGR00453">
    <property type="entry name" value="ispD"/>
    <property type="match status" value="1"/>
</dbReference>
<dbReference type="PANTHER" id="PTHR32125">
    <property type="entry name" value="2-C-METHYL-D-ERYTHRITOL 4-PHOSPHATE CYTIDYLYLTRANSFERASE, CHLOROPLASTIC"/>
    <property type="match status" value="1"/>
</dbReference>
<dbReference type="PANTHER" id="PTHR32125:SF4">
    <property type="entry name" value="2-C-METHYL-D-ERYTHRITOL 4-PHOSPHATE CYTIDYLYLTRANSFERASE, CHLOROPLASTIC"/>
    <property type="match status" value="1"/>
</dbReference>
<dbReference type="Pfam" id="PF01128">
    <property type="entry name" value="IspD"/>
    <property type="match status" value="1"/>
</dbReference>
<dbReference type="SUPFAM" id="SSF53448">
    <property type="entry name" value="Nucleotide-diphospho-sugar transferases"/>
    <property type="match status" value="1"/>
</dbReference>
<dbReference type="PROSITE" id="PS01295">
    <property type="entry name" value="ISPD"/>
    <property type="match status" value="1"/>
</dbReference>
<protein>
    <recommendedName>
        <fullName evidence="1">2-C-methyl-D-erythritol 4-phosphate cytidylyltransferase</fullName>
        <ecNumber evidence="1">2.7.7.60</ecNumber>
    </recommendedName>
    <alternativeName>
        <fullName evidence="1">4-diphosphocytidyl-2C-methyl-D-erythritol synthase</fullName>
    </alternativeName>
    <alternativeName>
        <fullName evidence="1">MEP cytidylyltransferase</fullName>
        <shortName evidence="1">MCT</shortName>
    </alternativeName>
</protein>
<reference key="1">
    <citation type="submission" date="2007-11" db="EMBL/GenBank/DDBJ databases">
        <title>Complete sequence of Petroga mobilis SJ95.</title>
        <authorList>
            <consortium name="US DOE Joint Genome Institute"/>
            <person name="Copeland A."/>
            <person name="Lucas S."/>
            <person name="Lapidus A."/>
            <person name="Barry K."/>
            <person name="Glavina del Rio T."/>
            <person name="Dalin E."/>
            <person name="Tice H."/>
            <person name="Pitluck S."/>
            <person name="Meincke L."/>
            <person name="Brettin T."/>
            <person name="Bruce D."/>
            <person name="Detter J.C."/>
            <person name="Han C."/>
            <person name="Kuske C.R."/>
            <person name="Schmutz J."/>
            <person name="Larimer F."/>
            <person name="Land M."/>
            <person name="Hauser L."/>
            <person name="Kyrpides N."/>
            <person name="Mikhailova N."/>
            <person name="Noll K."/>
            <person name="Richardson P."/>
        </authorList>
    </citation>
    <scope>NUCLEOTIDE SEQUENCE [LARGE SCALE GENOMIC DNA]</scope>
    <source>
        <strain>DSM 10674 / SJ95</strain>
    </source>
</reference>
<organism>
    <name type="scientific">Petrotoga mobilis (strain DSM 10674 / SJ95)</name>
    <dbReference type="NCBI Taxonomy" id="403833"/>
    <lineage>
        <taxon>Bacteria</taxon>
        <taxon>Thermotogati</taxon>
        <taxon>Thermotogota</taxon>
        <taxon>Thermotogae</taxon>
        <taxon>Petrotogales</taxon>
        <taxon>Petrotogaceae</taxon>
        <taxon>Petrotoga</taxon>
    </lineage>
</organism>
<accession>A9BHR2</accession>